<dbReference type="EMBL" id="BC041492">
    <property type="protein sequence ID" value="AAH41492.1"/>
    <property type="molecule type" value="mRNA"/>
</dbReference>
<dbReference type="EMBL" id="BC077238">
    <property type="protein sequence ID" value="AAH77238.1"/>
    <property type="molecule type" value="mRNA"/>
</dbReference>
<dbReference type="RefSeq" id="NP_001082530.1">
    <property type="nucleotide sequence ID" value="NM_001089061.1"/>
</dbReference>
<dbReference type="SMR" id="Q6DE96"/>
<dbReference type="DNASU" id="398541"/>
<dbReference type="GeneID" id="398541"/>
<dbReference type="KEGG" id="xla:398541"/>
<dbReference type="AGR" id="Xenbase:XB-GENE-6256046"/>
<dbReference type="CTD" id="398541"/>
<dbReference type="Xenbase" id="XB-GENE-6256046">
    <property type="gene designation" value="iws1.S"/>
</dbReference>
<dbReference type="OrthoDB" id="21124at2759"/>
<dbReference type="Proteomes" id="UP000186698">
    <property type="component" value="Chromosome 5S"/>
</dbReference>
<dbReference type="Bgee" id="398541">
    <property type="expression patterns" value="Expressed in gastrula and 19 other cell types or tissues"/>
</dbReference>
<dbReference type="GO" id="GO:0005634">
    <property type="term" value="C:nucleus"/>
    <property type="evidence" value="ECO:0000318"/>
    <property type="project" value="GO_Central"/>
</dbReference>
<dbReference type="GO" id="GO:0006397">
    <property type="term" value="P:mRNA processing"/>
    <property type="evidence" value="ECO:0007669"/>
    <property type="project" value="UniProtKB-KW"/>
</dbReference>
<dbReference type="GO" id="GO:0016973">
    <property type="term" value="P:poly(A)+ mRNA export from nucleus"/>
    <property type="evidence" value="ECO:0000318"/>
    <property type="project" value="GO_Central"/>
</dbReference>
<dbReference type="GO" id="GO:0008380">
    <property type="term" value="P:RNA splicing"/>
    <property type="evidence" value="ECO:0007669"/>
    <property type="project" value="UniProtKB-KW"/>
</dbReference>
<dbReference type="FunFam" id="1.20.930.10:FF:000001">
    <property type="entry name" value="IWS1, SUPT6H interacting protein"/>
    <property type="match status" value="1"/>
</dbReference>
<dbReference type="Gene3D" id="1.20.930.10">
    <property type="entry name" value="Conserved domain common to transcription factors TFIIS, elongin A, CRSP70"/>
    <property type="match status" value="1"/>
</dbReference>
<dbReference type="InterPro" id="IPR051037">
    <property type="entry name" value="RNAPII_TF_IWS1"/>
</dbReference>
<dbReference type="InterPro" id="IPR035441">
    <property type="entry name" value="TFIIS/LEDGF_dom_sf"/>
</dbReference>
<dbReference type="InterPro" id="IPR017923">
    <property type="entry name" value="TFIIS_N"/>
</dbReference>
<dbReference type="PANTHER" id="PTHR46010">
    <property type="entry name" value="PROTEIN IWS1 HOMOLOG"/>
    <property type="match status" value="1"/>
</dbReference>
<dbReference type="PANTHER" id="PTHR46010:SF1">
    <property type="entry name" value="PROTEIN IWS1 HOMOLOG"/>
    <property type="match status" value="1"/>
</dbReference>
<dbReference type="Pfam" id="PF08711">
    <property type="entry name" value="Med26"/>
    <property type="match status" value="1"/>
</dbReference>
<dbReference type="PROSITE" id="PS51319">
    <property type="entry name" value="TFIIS_N"/>
    <property type="match status" value="1"/>
</dbReference>
<feature type="chain" id="PRO_0000083349" description="Protein IWS1 homolog A">
    <location>
        <begin position="1"/>
        <end position="836"/>
    </location>
</feature>
<feature type="domain" description="TFIIS N-terminal" evidence="2">
    <location>
        <begin position="631"/>
        <end position="709"/>
    </location>
</feature>
<feature type="region of interest" description="Disordered" evidence="3">
    <location>
        <begin position="1"/>
        <end position="542"/>
    </location>
</feature>
<feature type="region of interest" description="Disordered" evidence="3">
    <location>
        <begin position="714"/>
        <end position="746"/>
    </location>
</feature>
<feature type="compositionally biased region" description="Basic and acidic residues" evidence="3">
    <location>
        <begin position="20"/>
        <end position="36"/>
    </location>
</feature>
<feature type="compositionally biased region" description="Basic and acidic residues" evidence="3">
    <location>
        <begin position="43"/>
        <end position="122"/>
    </location>
</feature>
<feature type="compositionally biased region" description="Basic and acidic residues" evidence="3">
    <location>
        <begin position="133"/>
        <end position="148"/>
    </location>
</feature>
<feature type="compositionally biased region" description="Basic and acidic residues" evidence="3">
    <location>
        <begin position="157"/>
        <end position="186"/>
    </location>
</feature>
<feature type="compositionally biased region" description="Basic and acidic residues" evidence="3">
    <location>
        <begin position="206"/>
        <end position="218"/>
    </location>
</feature>
<feature type="compositionally biased region" description="Basic and acidic residues" evidence="3">
    <location>
        <begin position="288"/>
        <end position="309"/>
    </location>
</feature>
<feature type="compositionally biased region" description="Basic and acidic residues" evidence="3">
    <location>
        <begin position="370"/>
        <end position="386"/>
    </location>
</feature>
<feature type="compositionally biased region" description="Basic and acidic residues" evidence="3">
    <location>
        <begin position="458"/>
        <end position="469"/>
    </location>
</feature>
<feature type="compositionally biased region" description="Acidic residues" evidence="3">
    <location>
        <begin position="476"/>
        <end position="485"/>
    </location>
</feature>
<feature type="compositionally biased region" description="Basic and acidic residues" evidence="3">
    <location>
        <begin position="533"/>
        <end position="542"/>
    </location>
</feature>
<feature type="compositionally biased region" description="Basic and acidic residues" evidence="3">
    <location>
        <begin position="716"/>
        <end position="727"/>
    </location>
</feature>
<feature type="sequence conflict" description="In Ref. 1; AAH41492." evidence="4" ref="1">
    <original>S</original>
    <variation>C</variation>
    <location>
        <position position="138"/>
    </location>
</feature>
<feature type="sequence conflict" description="In Ref. 1; AAH41492." evidence="4" ref="1">
    <original>D</original>
    <variation>G</variation>
    <location>
        <position position="269"/>
    </location>
</feature>
<feature type="sequence conflict" description="In Ref. 1; AAH41492." evidence="4" ref="1">
    <location>
        <begin position="281"/>
        <end position="282"/>
    </location>
</feature>
<protein>
    <recommendedName>
        <fullName>Protein IWS1 homolog A</fullName>
    </recommendedName>
    <alternativeName>
        <fullName>IWS1-like protein A</fullName>
    </alternativeName>
</protein>
<sequence length="836" mass="92703">MEADNYSPEHSDDGGATPVQDERDSASDDEGNEQRSEPGSPEHQSEDEHSDVEDHKHSSDSGSDNEKGTEHDSEDEHRPRNSSDLENHDASDSENEESHNRIASDSEDDGRRQKNSDSDRSPVKGAASDSDEEPVRHSASDSEDDVPRKQQANDSEDERHIKKTASDSEDEAPAKHRVSDTEDKAPPKQVASDSEDEASPKQVASDSKDEAPPKHAASDSEDEAPPKLAGSDSEDEAPAKRKVSSSEDETPSKHAVSASKVKKSVGSEDKTRGKRAIIDSDDDDDDDVPVKRAASDSEEETHPKGKASDSEDEAPSKQPSDSEEETPAKVAANDSEDEFPRMKRKIVSSDDSDDEDDRKPLQKKKKSPRRSSESDSSDKVDGKKLQASESDEEGEKASKKKKSNIVSDSEDEDAADKSGNKKSRILSDGEDSDSDAASEKPKQKKKKSASSDSEEEDERKSKTETKSADKLFGSESDSENEEENLIADIFGESGDEEEEEFTGFNQEDLEGEKTVTSVNRQQAAAADSDSDDDMKSGKMGDYKSDFDLMLERKKSMSGKQRRNRDGGTFISDADDVVNAMIMKMTEAAEEDRNLNSSKKPALKKLTLLPTVVMHLKKQDLKETFIDSGVMSAIKEWLTPLPDRSLPALKIREELLKILQELPSVSQETLKHSGIGRAIMYLYKHPKESRPNKDIAGKLINEWSRPIFGLTSNYKGMTREEREQRDIEQMPQRRRMSSSGGQTPRRDLDKVLTGEEKALRPGEPGFCARARVPLPSNKDYVVRPKWNVEMETSQYQGSAKKGVSRIDKQMRKFVDIKKKNRFGHAVKISIEGNKMPL</sequence>
<name>IWS1A_XENLA</name>
<keyword id="KW-0507">mRNA processing</keyword>
<keyword id="KW-0508">mRNA splicing</keyword>
<keyword id="KW-0509">mRNA transport</keyword>
<keyword id="KW-0539">Nucleus</keyword>
<keyword id="KW-1185">Reference proteome</keyword>
<keyword id="KW-0804">Transcription</keyword>
<keyword id="KW-0805">Transcription regulation</keyword>
<keyword id="KW-0813">Transport</keyword>
<accession>Q6DE96</accession>
<accession>Q8AVS0</accession>
<organism>
    <name type="scientific">Xenopus laevis</name>
    <name type="common">African clawed frog</name>
    <dbReference type="NCBI Taxonomy" id="8355"/>
    <lineage>
        <taxon>Eukaryota</taxon>
        <taxon>Metazoa</taxon>
        <taxon>Chordata</taxon>
        <taxon>Craniata</taxon>
        <taxon>Vertebrata</taxon>
        <taxon>Euteleostomi</taxon>
        <taxon>Amphibia</taxon>
        <taxon>Batrachia</taxon>
        <taxon>Anura</taxon>
        <taxon>Pipoidea</taxon>
        <taxon>Pipidae</taxon>
        <taxon>Xenopodinae</taxon>
        <taxon>Xenopus</taxon>
        <taxon>Xenopus</taxon>
    </lineage>
</organism>
<evidence type="ECO:0000250" key="1"/>
<evidence type="ECO:0000255" key="2">
    <source>
        <dbReference type="PROSITE-ProRule" id="PRU00649"/>
    </source>
</evidence>
<evidence type="ECO:0000256" key="3">
    <source>
        <dbReference type="SAM" id="MobiDB-lite"/>
    </source>
</evidence>
<evidence type="ECO:0000305" key="4"/>
<comment type="function">
    <text evidence="1">Transcription factor which plays a key role in defining the composition of the RNA polymerase II (RNAPII) elongation complex and in modulating the production of mature mRNA transcripts.</text>
</comment>
<comment type="subcellular location">
    <subcellularLocation>
        <location evidence="2">Nucleus</location>
    </subcellularLocation>
</comment>
<comment type="similarity">
    <text evidence="4">Belongs to the IWS1 family.</text>
</comment>
<proteinExistence type="evidence at transcript level"/>
<gene>
    <name type="primary">iws1-a</name>
    <name type="synonym">iws1l-a</name>
</gene>
<reference key="1">
    <citation type="submission" date="2004-07" db="EMBL/GenBank/DDBJ databases">
        <authorList>
            <consortium name="NIH - Xenopus Gene Collection (XGC) project"/>
        </authorList>
    </citation>
    <scope>NUCLEOTIDE SEQUENCE [LARGE SCALE MRNA]</scope>
    <source>
        <tissue>Ovary</tissue>
    </source>
</reference>